<gene>
    <name type="ordered locus">Os10g0490500</name>
    <name type="ordered locus">LOC_Os10g34890</name>
    <name type="ORF">P0031G09.2</name>
</gene>
<organism>
    <name type="scientific">Oryza sativa subsp. japonica</name>
    <name type="common">Rice</name>
    <dbReference type="NCBI Taxonomy" id="39947"/>
    <lineage>
        <taxon>Eukaryota</taxon>
        <taxon>Viridiplantae</taxon>
        <taxon>Streptophyta</taxon>
        <taxon>Embryophyta</taxon>
        <taxon>Tracheophyta</taxon>
        <taxon>Spermatophyta</taxon>
        <taxon>Magnoliopsida</taxon>
        <taxon>Liliopsida</taxon>
        <taxon>Poales</taxon>
        <taxon>Poaceae</taxon>
        <taxon>BOP clade</taxon>
        <taxon>Oryzoideae</taxon>
        <taxon>Oryzeae</taxon>
        <taxon>Oryzinae</taxon>
        <taxon>Oryza</taxon>
        <taxon>Oryza sativa</taxon>
    </lineage>
</organism>
<evidence type="ECO:0000255" key="1"/>
<evidence type="ECO:0000305" key="2"/>
<proteinExistence type="inferred from homology"/>
<accession>Q8LN49</accession>
<reference key="1">
    <citation type="journal article" date="2003" name="Science">
        <title>In-depth view of structure, activity, and evolution of rice chromosome 10.</title>
        <authorList>
            <person name="Yu Y."/>
            <person name="Rambo T."/>
            <person name="Currie J."/>
            <person name="Saski C."/>
            <person name="Kim H.-R."/>
            <person name="Collura K."/>
            <person name="Thompson S."/>
            <person name="Simmons J."/>
            <person name="Yang T.-J."/>
            <person name="Nah G."/>
            <person name="Patel A.J."/>
            <person name="Thurmond S."/>
            <person name="Henry D."/>
            <person name="Oates R."/>
            <person name="Palmer M."/>
            <person name="Pries G."/>
            <person name="Gibson J."/>
            <person name="Anderson H."/>
            <person name="Paradkar M."/>
            <person name="Crane L."/>
            <person name="Dale J."/>
            <person name="Carver M.B."/>
            <person name="Wood T."/>
            <person name="Frisch D."/>
            <person name="Engler F."/>
            <person name="Soderlund C."/>
            <person name="Palmer L.E."/>
            <person name="Teytelman L."/>
            <person name="Nascimento L."/>
            <person name="De la Bastide M."/>
            <person name="Spiegel L."/>
            <person name="Ware D."/>
            <person name="O'Shaughnessy A."/>
            <person name="Dike S."/>
            <person name="Dedhia N."/>
            <person name="Preston R."/>
            <person name="Huang E."/>
            <person name="Ferraro K."/>
            <person name="Kuit K."/>
            <person name="Miller B."/>
            <person name="Zutavern T."/>
            <person name="Katzenberger F."/>
            <person name="Muller S."/>
            <person name="Balija V."/>
            <person name="Martienssen R.A."/>
            <person name="Stein L."/>
            <person name="Minx P."/>
            <person name="Johnson D."/>
            <person name="Cordum H."/>
            <person name="Mardis E."/>
            <person name="Cheng Z."/>
            <person name="Jiang J."/>
            <person name="Wilson R."/>
            <person name="McCombie W.R."/>
            <person name="Wing R.A."/>
            <person name="Yuan Q."/>
            <person name="Ouyang S."/>
            <person name="Liu J."/>
            <person name="Jones K.M."/>
            <person name="Gansberger K."/>
            <person name="Moffat K."/>
            <person name="Hill J."/>
            <person name="Tsitrin T."/>
            <person name="Overton L."/>
            <person name="Bera J."/>
            <person name="Kim M."/>
            <person name="Jin S."/>
            <person name="Tallon L."/>
            <person name="Ciecko A."/>
            <person name="Pai G."/>
            <person name="Van Aken S."/>
            <person name="Utterback T."/>
            <person name="Reidmuller S."/>
            <person name="Bormann J."/>
            <person name="Feldblyum T."/>
            <person name="Hsiao J."/>
            <person name="Zismann V."/>
            <person name="Blunt S."/>
            <person name="de Vazeille A.R."/>
            <person name="Shaffer T."/>
            <person name="Koo H."/>
            <person name="Suh B."/>
            <person name="Yang Q."/>
            <person name="Haas B."/>
            <person name="Peterson J."/>
            <person name="Pertea M."/>
            <person name="Volfovsky N."/>
            <person name="Wortman J."/>
            <person name="White O."/>
            <person name="Salzberg S.L."/>
            <person name="Fraser C.M."/>
            <person name="Buell C.R."/>
            <person name="Messing J."/>
            <person name="Song R."/>
            <person name="Fuks G."/>
            <person name="Llaca V."/>
            <person name="Kovchak S."/>
            <person name="Young S."/>
            <person name="Bowers J.E."/>
            <person name="Paterson A.H."/>
            <person name="Johns M.A."/>
            <person name="Mao L."/>
            <person name="Pan H."/>
            <person name="Dean R.A."/>
        </authorList>
    </citation>
    <scope>NUCLEOTIDE SEQUENCE [LARGE SCALE GENOMIC DNA]</scope>
    <source>
        <strain>cv. Nipponbare</strain>
    </source>
</reference>
<reference key="2">
    <citation type="journal article" date="2005" name="Nature">
        <title>The map-based sequence of the rice genome.</title>
        <authorList>
            <consortium name="International rice genome sequencing project (IRGSP)"/>
        </authorList>
    </citation>
    <scope>NUCLEOTIDE SEQUENCE [LARGE SCALE GENOMIC DNA]</scope>
    <source>
        <strain>cv. Nipponbare</strain>
    </source>
</reference>
<reference key="3">
    <citation type="journal article" date="2008" name="Nucleic Acids Res.">
        <title>The rice annotation project database (RAP-DB): 2008 update.</title>
        <authorList>
            <consortium name="The rice annotation project (RAP)"/>
        </authorList>
    </citation>
    <scope>GENOME REANNOTATION</scope>
    <source>
        <strain>cv. Nipponbare</strain>
    </source>
</reference>
<reference key="4">
    <citation type="journal article" date="2013" name="Rice">
        <title>Improvement of the Oryza sativa Nipponbare reference genome using next generation sequence and optical map data.</title>
        <authorList>
            <person name="Kawahara Y."/>
            <person name="de la Bastide M."/>
            <person name="Hamilton J.P."/>
            <person name="Kanamori H."/>
            <person name="McCombie W.R."/>
            <person name="Ouyang S."/>
            <person name="Schwartz D.C."/>
            <person name="Tanaka T."/>
            <person name="Wu J."/>
            <person name="Zhou S."/>
            <person name="Childs K.L."/>
            <person name="Davidson R.M."/>
            <person name="Lin H."/>
            <person name="Quesada-Ocampo L."/>
            <person name="Vaillancourt B."/>
            <person name="Sakai H."/>
            <person name="Lee S.S."/>
            <person name="Kim J."/>
            <person name="Numa H."/>
            <person name="Itoh T."/>
            <person name="Buell C.R."/>
            <person name="Matsumoto T."/>
        </authorList>
    </citation>
    <scope>GENOME REANNOTATION</scope>
    <source>
        <strain>cv. Nipponbare</strain>
    </source>
</reference>
<keyword id="KW-1185">Reference proteome</keyword>
<keyword id="KW-0964">Secreted</keyword>
<keyword id="KW-0732">Signal</keyword>
<sequence length="276" mass="30133">MAMIFLLAALSTTHLASSLRPVAAGACRPSGYLPGKSGNCEKSNDPDCCEDGKAYPQYRFEKGKDGGGPSECDNAYHSDGELVVALSTGWFAGTARCGHRVRITASGGGGRSVVAKVVDECDSVHGCDGEHNYEAPCGNNIVDASPAVWDALGLDKNVGMEHITWGREPQGKIPVQGFSMHQLNPSQSPGKRFLVGEISLPPFGSSSREWEMVSWKCFLPAFMSINYLHGSSHLRTKLNIKGEWQLDRYPFTTLQQHILSRKFVMLWCIQVKKNVL</sequence>
<comment type="subcellular location">
    <subcellularLocation>
        <location evidence="2">Secreted</location>
    </subcellularLocation>
</comment>
<comment type="similarity">
    <text evidence="2">Belongs to the kiwellin family.</text>
</comment>
<name>RIP5_ORYSJ</name>
<protein>
    <recommendedName>
        <fullName>Putative ripening-related protein 5</fullName>
    </recommendedName>
</protein>
<dbReference type="EMBL" id="AC092211">
    <property type="protein sequence ID" value="AAN05004.1"/>
    <property type="molecule type" value="Genomic_DNA"/>
</dbReference>
<dbReference type="EMBL" id="AP008216">
    <property type="status" value="NOT_ANNOTATED_CDS"/>
    <property type="molecule type" value="Genomic_DNA"/>
</dbReference>
<dbReference type="EMBL" id="AP014966">
    <property type="status" value="NOT_ANNOTATED_CDS"/>
    <property type="molecule type" value="Genomic_DNA"/>
</dbReference>
<dbReference type="SMR" id="Q8LN49"/>
<dbReference type="FunCoup" id="Q8LN49">
    <property type="interactions" value="1"/>
</dbReference>
<dbReference type="PaxDb" id="39947-Q8LN49"/>
<dbReference type="InParanoid" id="Q8LN49"/>
<dbReference type="Proteomes" id="UP000000763">
    <property type="component" value="Chromosome 10"/>
</dbReference>
<dbReference type="Proteomes" id="UP000059680">
    <property type="component" value="Chromosome 10"/>
</dbReference>
<dbReference type="GO" id="GO:0005576">
    <property type="term" value="C:extracellular region"/>
    <property type="evidence" value="ECO:0007669"/>
    <property type="project" value="UniProtKB-SubCell"/>
</dbReference>
<dbReference type="CDD" id="cd22270">
    <property type="entry name" value="DPBB_kiwellin-like"/>
    <property type="match status" value="1"/>
</dbReference>
<dbReference type="Gene3D" id="2.40.40.10">
    <property type="entry name" value="RlpA-like domain"/>
    <property type="match status" value="1"/>
</dbReference>
<dbReference type="InterPro" id="IPR039271">
    <property type="entry name" value="Kiwellin-like"/>
</dbReference>
<dbReference type="InterPro" id="IPR036908">
    <property type="entry name" value="RlpA-like_sf"/>
</dbReference>
<dbReference type="PANTHER" id="PTHR33191">
    <property type="entry name" value="RIPENING-RELATED PROTEIN 2-RELATED"/>
    <property type="match status" value="1"/>
</dbReference>
<dbReference type="PANTHER" id="PTHR33191:SF76">
    <property type="entry name" value="RIPENING-RELATED PROTEIN 5-RELATED"/>
    <property type="match status" value="1"/>
</dbReference>
<dbReference type="Pfam" id="PF24300">
    <property type="entry name" value="KWL1"/>
    <property type="match status" value="2"/>
</dbReference>
<dbReference type="SUPFAM" id="SSF50685">
    <property type="entry name" value="Barwin-like endoglucanases"/>
    <property type="match status" value="1"/>
</dbReference>
<feature type="signal peptide" evidence="1">
    <location>
        <begin position="1"/>
        <end position="18"/>
    </location>
</feature>
<feature type="chain" id="PRO_0000045972" description="Putative ripening-related protein 5">
    <location>
        <begin position="19"/>
        <end position="276"/>
    </location>
</feature>